<keyword id="KW-0028">Amino-acid biosynthesis</keyword>
<keyword id="KW-0100">Branched-chain amino acid biosynthesis</keyword>
<keyword id="KW-0963">Cytoplasm</keyword>
<keyword id="KW-0432">Leucine biosynthesis</keyword>
<keyword id="KW-0464">Manganese</keyword>
<keyword id="KW-0479">Metal-binding</keyword>
<keyword id="KW-1185">Reference proteome</keyword>
<keyword id="KW-0808">Transferase</keyword>
<proteinExistence type="inferred from homology"/>
<feature type="chain" id="PRO_0000140387" description="2-isopropylmalate synthase">
    <location>
        <begin position="1"/>
        <end position="511"/>
    </location>
</feature>
<feature type="domain" description="Pyruvate carboxyltransferase" evidence="1">
    <location>
        <begin position="5"/>
        <end position="267"/>
    </location>
</feature>
<feature type="region of interest" description="Regulatory domain" evidence="1">
    <location>
        <begin position="391"/>
        <end position="511"/>
    </location>
</feature>
<feature type="binding site" evidence="1">
    <location>
        <position position="14"/>
    </location>
    <ligand>
        <name>Mn(2+)</name>
        <dbReference type="ChEBI" id="CHEBI:29035"/>
    </ligand>
</feature>
<feature type="binding site" evidence="1">
    <location>
        <position position="202"/>
    </location>
    <ligand>
        <name>Mn(2+)</name>
        <dbReference type="ChEBI" id="CHEBI:29035"/>
    </ligand>
</feature>
<feature type="binding site" evidence="1">
    <location>
        <position position="204"/>
    </location>
    <ligand>
        <name>Mn(2+)</name>
        <dbReference type="ChEBI" id="CHEBI:29035"/>
    </ligand>
</feature>
<feature type="binding site" evidence="1">
    <location>
        <position position="238"/>
    </location>
    <ligand>
        <name>Mn(2+)</name>
        <dbReference type="ChEBI" id="CHEBI:29035"/>
    </ligand>
</feature>
<organism>
    <name type="scientific">Staphylococcus saprophyticus subsp. saprophyticus (strain ATCC 15305 / DSM 20229 / NCIMB 8711 / NCTC 7292 / S-41)</name>
    <dbReference type="NCBI Taxonomy" id="342451"/>
    <lineage>
        <taxon>Bacteria</taxon>
        <taxon>Bacillati</taxon>
        <taxon>Bacillota</taxon>
        <taxon>Bacilli</taxon>
        <taxon>Bacillales</taxon>
        <taxon>Staphylococcaceae</taxon>
        <taxon>Staphylococcus</taxon>
    </lineage>
</organism>
<name>LEU1_STAS1</name>
<reference key="1">
    <citation type="journal article" date="2005" name="Proc. Natl. Acad. Sci. U.S.A.">
        <title>Whole genome sequence of Staphylococcus saprophyticus reveals the pathogenesis of uncomplicated urinary tract infection.</title>
        <authorList>
            <person name="Kuroda M."/>
            <person name="Yamashita A."/>
            <person name="Hirakawa H."/>
            <person name="Kumano M."/>
            <person name="Morikawa K."/>
            <person name="Higashide M."/>
            <person name="Maruyama A."/>
            <person name="Inose Y."/>
            <person name="Matoba K."/>
            <person name="Toh H."/>
            <person name="Kuhara S."/>
            <person name="Hattori M."/>
            <person name="Ohta T."/>
        </authorList>
    </citation>
    <scope>NUCLEOTIDE SEQUENCE [LARGE SCALE GENOMIC DNA]</scope>
    <source>
        <strain>ATCC 15305 / DSM 20229 / NCIMB 8711 / NCTC 7292 / S-41</strain>
    </source>
</reference>
<evidence type="ECO:0000255" key="1">
    <source>
        <dbReference type="HAMAP-Rule" id="MF_01025"/>
    </source>
</evidence>
<protein>
    <recommendedName>
        <fullName evidence="1">2-isopropylmalate synthase</fullName>
        <ecNumber evidence="1">2.3.3.13</ecNumber>
    </recommendedName>
    <alternativeName>
        <fullName evidence="1">Alpha-IPM synthase</fullName>
    </alternativeName>
    <alternativeName>
        <fullName evidence="1">Alpha-isopropylmalate synthase</fullName>
    </alternativeName>
</protein>
<gene>
    <name evidence="1" type="primary">leuA</name>
    <name type="ordered locus">SSP0821</name>
</gene>
<dbReference type="EC" id="2.3.3.13" evidence="1"/>
<dbReference type="EMBL" id="AP008934">
    <property type="protein sequence ID" value="BAE17966.1"/>
    <property type="molecule type" value="Genomic_DNA"/>
</dbReference>
<dbReference type="RefSeq" id="WP_011302712.1">
    <property type="nucleotide sequence ID" value="NZ_MTGA01000028.1"/>
</dbReference>
<dbReference type="SMR" id="Q49Z12"/>
<dbReference type="KEGG" id="ssp:SSP0821"/>
<dbReference type="eggNOG" id="COG0119">
    <property type="taxonomic scope" value="Bacteria"/>
</dbReference>
<dbReference type="HOGENOM" id="CLU_022158_0_1_9"/>
<dbReference type="OrthoDB" id="9804858at2"/>
<dbReference type="UniPathway" id="UPA00048">
    <property type="reaction ID" value="UER00070"/>
</dbReference>
<dbReference type="Proteomes" id="UP000006371">
    <property type="component" value="Chromosome"/>
</dbReference>
<dbReference type="GO" id="GO:0005737">
    <property type="term" value="C:cytoplasm"/>
    <property type="evidence" value="ECO:0007669"/>
    <property type="project" value="UniProtKB-SubCell"/>
</dbReference>
<dbReference type="GO" id="GO:0003852">
    <property type="term" value="F:2-isopropylmalate synthase activity"/>
    <property type="evidence" value="ECO:0007669"/>
    <property type="project" value="UniProtKB-UniRule"/>
</dbReference>
<dbReference type="GO" id="GO:0003985">
    <property type="term" value="F:acetyl-CoA C-acetyltransferase activity"/>
    <property type="evidence" value="ECO:0007669"/>
    <property type="project" value="UniProtKB-UniRule"/>
</dbReference>
<dbReference type="GO" id="GO:0030145">
    <property type="term" value="F:manganese ion binding"/>
    <property type="evidence" value="ECO:0007669"/>
    <property type="project" value="UniProtKB-UniRule"/>
</dbReference>
<dbReference type="GO" id="GO:0009098">
    <property type="term" value="P:L-leucine biosynthetic process"/>
    <property type="evidence" value="ECO:0007669"/>
    <property type="project" value="UniProtKB-UniRule"/>
</dbReference>
<dbReference type="CDD" id="cd07940">
    <property type="entry name" value="DRE_TIM_IPMS"/>
    <property type="match status" value="1"/>
</dbReference>
<dbReference type="FunFam" id="1.10.238.260:FF:000001">
    <property type="entry name" value="2-isopropylmalate synthase"/>
    <property type="match status" value="1"/>
</dbReference>
<dbReference type="FunFam" id="3.20.20.70:FF:000010">
    <property type="entry name" value="2-isopropylmalate synthase"/>
    <property type="match status" value="1"/>
</dbReference>
<dbReference type="FunFam" id="3.30.160.270:FF:000003">
    <property type="entry name" value="2-isopropylmalate synthase"/>
    <property type="match status" value="1"/>
</dbReference>
<dbReference type="Gene3D" id="1.10.238.260">
    <property type="match status" value="1"/>
</dbReference>
<dbReference type="Gene3D" id="3.30.160.270">
    <property type="match status" value="1"/>
</dbReference>
<dbReference type="Gene3D" id="3.20.20.70">
    <property type="entry name" value="Aldolase class I"/>
    <property type="match status" value="1"/>
</dbReference>
<dbReference type="HAMAP" id="MF_01025">
    <property type="entry name" value="LeuA_type1"/>
    <property type="match status" value="1"/>
</dbReference>
<dbReference type="InterPro" id="IPR050073">
    <property type="entry name" value="2-IPM_HCS-like"/>
</dbReference>
<dbReference type="InterPro" id="IPR013709">
    <property type="entry name" value="2-isopropylmalate_synth_dimer"/>
</dbReference>
<dbReference type="InterPro" id="IPR013785">
    <property type="entry name" value="Aldolase_TIM"/>
</dbReference>
<dbReference type="InterPro" id="IPR054691">
    <property type="entry name" value="LeuA/HCS_post-cat"/>
</dbReference>
<dbReference type="InterPro" id="IPR036230">
    <property type="entry name" value="LeuA_allosteric_dom_sf"/>
</dbReference>
<dbReference type="InterPro" id="IPR005671">
    <property type="entry name" value="LeuA_bact_synth"/>
</dbReference>
<dbReference type="InterPro" id="IPR000891">
    <property type="entry name" value="PYR_CT"/>
</dbReference>
<dbReference type="NCBIfam" id="TIGR00973">
    <property type="entry name" value="leuA_bact"/>
    <property type="match status" value="1"/>
</dbReference>
<dbReference type="NCBIfam" id="NF002086">
    <property type="entry name" value="PRK00915.1-3"/>
    <property type="match status" value="1"/>
</dbReference>
<dbReference type="NCBIfam" id="NF002088">
    <property type="entry name" value="PRK00915.1-5"/>
    <property type="match status" value="1"/>
</dbReference>
<dbReference type="PANTHER" id="PTHR10277:SF9">
    <property type="entry name" value="2-ISOPROPYLMALATE SYNTHASE 1, CHLOROPLASTIC-RELATED"/>
    <property type="match status" value="1"/>
</dbReference>
<dbReference type="PANTHER" id="PTHR10277">
    <property type="entry name" value="HOMOCITRATE SYNTHASE-RELATED"/>
    <property type="match status" value="1"/>
</dbReference>
<dbReference type="Pfam" id="PF22617">
    <property type="entry name" value="HCS_D2"/>
    <property type="match status" value="1"/>
</dbReference>
<dbReference type="Pfam" id="PF00682">
    <property type="entry name" value="HMGL-like"/>
    <property type="match status" value="1"/>
</dbReference>
<dbReference type="Pfam" id="PF08502">
    <property type="entry name" value="LeuA_dimer"/>
    <property type="match status" value="1"/>
</dbReference>
<dbReference type="SMART" id="SM00917">
    <property type="entry name" value="LeuA_dimer"/>
    <property type="match status" value="1"/>
</dbReference>
<dbReference type="SUPFAM" id="SSF110921">
    <property type="entry name" value="2-isopropylmalate synthase LeuA, allosteric (dimerisation) domain"/>
    <property type="match status" value="1"/>
</dbReference>
<dbReference type="SUPFAM" id="SSF51569">
    <property type="entry name" value="Aldolase"/>
    <property type="match status" value="1"/>
</dbReference>
<dbReference type="PROSITE" id="PS50991">
    <property type="entry name" value="PYR_CT"/>
    <property type="match status" value="1"/>
</dbReference>
<sequence>MSSHIQIFDTTLRDGEQTPGVNFSFDERLKIAKQLEKWGVDIIEAGFPASSSGSFKSVEAIAKTLTTTAVCGLARCVKKDIDAVYESTKAAAKPRIHVFIATSPIHRDSKLMMSKEEVLASIKEHVSYAKQYFDVVQFSPEDATRTELPFLIECVQTAVDAGASVINIPDTVGFSYPKEYGEIFKTLQESVHADHDVIYSAHCHDDLGLAVANSMAAIENGAKRIEGTLNGIGERAGNTALEEVALGLYVRQDHYDNQTQINLEETKQTSDLIARFAGIRVPRNKAIVGQNAFSHESGIHQDGVLKNPETYEIMTPQLVGVKTTELPLGKLSGKHAFAEKLTALGYDVDPEEQKTLFKQFKTVADKKKAVTDRDIHALIQGTEHEQNAIYKVETLQLQFVSNGLQSAVVVIKDIDGNTYQDSSIGTGSIVSVYNAVDRIFDRKTELIEYRIDSVTEGTDAQAEVHVQIKIDDQIVTGVGIDHDILLASCKSYVEAHAKYVANTKVEEGIHS</sequence>
<accession>Q49Z12</accession>
<comment type="function">
    <text evidence="1">Catalyzes the condensation of the acetyl group of acetyl-CoA with 3-methyl-2-oxobutanoate (2-ketoisovalerate) to form 3-carboxy-3-hydroxy-4-methylpentanoate (2-isopropylmalate).</text>
</comment>
<comment type="catalytic activity">
    <reaction evidence="1">
        <text>3-methyl-2-oxobutanoate + acetyl-CoA + H2O = (2S)-2-isopropylmalate + CoA + H(+)</text>
        <dbReference type="Rhea" id="RHEA:21524"/>
        <dbReference type="ChEBI" id="CHEBI:1178"/>
        <dbReference type="ChEBI" id="CHEBI:11851"/>
        <dbReference type="ChEBI" id="CHEBI:15377"/>
        <dbReference type="ChEBI" id="CHEBI:15378"/>
        <dbReference type="ChEBI" id="CHEBI:57287"/>
        <dbReference type="ChEBI" id="CHEBI:57288"/>
        <dbReference type="EC" id="2.3.3.13"/>
    </reaction>
</comment>
<comment type="cofactor">
    <cofactor evidence="1">
        <name>Mn(2+)</name>
        <dbReference type="ChEBI" id="CHEBI:29035"/>
    </cofactor>
</comment>
<comment type="pathway">
    <text evidence="1">Amino-acid biosynthesis; L-leucine biosynthesis; L-leucine from 3-methyl-2-oxobutanoate: step 1/4.</text>
</comment>
<comment type="subunit">
    <text evidence="1">Homodimer.</text>
</comment>
<comment type="subcellular location">
    <subcellularLocation>
        <location evidence="1">Cytoplasm</location>
    </subcellularLocation>
</comment>
<comment type="similarity">
    <text evidence="1">Belongs to the alpha-IPM synthase/homocitrate synthase family. LeuA type 1 subfamily.</text>
</comment>